<protein>
    <recommendedName>
        <fullName>Integrase</fullName>
        <ecNumber evidence="1">2.7.7.-</ecNumber>
        <ecNumber evidence="1">3.1.-.-</ecNumber>
    </recommendedName>
</protein>
<proteinExistence type="inferred from homology"/>
<evidence type="ECO:0000250" key="1">
    <source>
        <dbReference type="UniProtKB" id="P03700"/>
    </source>
</evidence>
<evidence type="ECO:0000255" key="2">
    <source>
        <dbReference type="PROSITE-ProRule" id="PRU01246"/>
    </source>
</evidence>
<evidence type="ECO:0000255" key="3">
    <source>
        <dbReference type="PROSITE-ProRule" id="PRU01248"/>
    </source>
</evidence>
<evidence type="ECO:0000305" key="4"/>
<accession>P25426</accession>
<sequence length="333" mass="37282">MDAEAWLASEKRLIDNEEWTPPAEREKKAAASAITVEEYTKKWIAERDLAGGTKDLYSTHARKRIYPVLGDTPVAEMTPALVRAWWAGMGKQYPTARRHAYNVLRAVMNTAVEDKLVSENPCRIEQKAPAERDVEALTPEELDVVAGEVFEHYRVAVYILAWTSLRFGELIEIRRKDIMDDGETMKLRVRRGPARVGEKIVVGNTKTVRSKRPVTVPPHVAAMIRAHMADRTKMNKGPEALLVTTTRGQRLSKSAFTRSLKKGYAKIGRPDLRIHDLRAVGATLAAQAGATTKELMVRLGHTTPRMAMKYQMASAARDEEIARRMSELAGITP</sequence>
<dbReference type="EC" id="2.7.7.-" evidence="1"/>
<dbReference type="EC" id="3.1.-.-" evidence="1"/>
<dbReference type="EMBL" id="X63702">
    <property type="protein sequence ID" value="CAA45229.1"/>
    <property type="molecule type" value="Genomic_DNA"/>
</dbReference>
<dbReference type="PIR" id="S22643">
    <property type="entry name" value="S22643"/>
</dbReference>
<dbReference type="SMR" id="P25426"/>
<dbReference type="GO" id="GO:0003677">
    <property type="term" value="F:DNA binding"/>
    <property type="evidence" value="ECO:0007669"/>
    <property type="project" value="UniProtKB-KW"/>
</dbReference>
<dbReference type="GO" id="GO:0016787">
    <property type="term" value="F:hydrolase activity"/>
    <property type="evidence" value="ECO:0007669"/>
    <property type="project" value="UniProtKB-KW"/>
</dbReference>
<dbReference type="GO" id="GO:0016740">
    <property type="term" value="F:transferase activity"/>
    <property type="evidence" value="ECO:0007669"/>
    <property type="project" value="UniProtKB-KW"/>
</dbReference>
<dbReference type="GO" id="GO:0015074">
    <property type="term" value="P:DNA integration"/>
    <property type="evidence" value="ECO:0007669"/>
    <property type="project" value="UniProtKB-KW"/>
</dbReference>
<dbReference type="GO" id="GO:0006310">
    <property type="term" value="P:DNA recombination"/>
    <property type="evidence" value="ECO:0007669"/>
    <property type="project" value="UniProtKB-KW"/>
</dbReference>
<dbReference type="GO" id="GO:0075713">
    <property type="term" value="P:establishment of integrated proviral latency"/>
    <property type="evidence" value="ECO:0007669"/>
    <property type="project" value="UniProtKB-KW"/>
</dbReference>
<dbReference type="GO" id="GO:0046718">
    <property type="term" value="P:symbiont entry into host cell"/>
    <property type="evidence" value="ECO:0007669"/>
    <property type="project" value="UniProtKB-KW"/>
</dbReference>
<dbReference type="GO" id="GO:0044826">
    <property type="term" value="P:viral genome integration into host DNA"/>
    <property type="evidence" value="ECO:0007669"/>
    <property type="project" value="UniProtKB-KW"/>
</dbReference>
<dbReference type="Gene3D" id="1.10.150.130">
    <property type="match status" value="1"/>
</dbReference>
<dbReference type="Gene3D" id="1.10.443.10">
    <property type="entry name" value="Intergrase catalytic core"/>
    <property type="match status" value="1"/>
</dbReference>
<dbReference type="InterPro" id="IPR044068">
    <property type="entry name" value="CB"/>
</dbReference>
<dbReference type="InterPro" id="IPR011010">
    <property type="entry name" value="DNA_brk_join_enz"/>
</dbReference>
<dbReference type="InterPro" id="IPR013762">
    <property type="entry name" value="Integrase-like_cat_sf"/>
</dbReference>
<dbReference type="InterPro" id="IPR002104">
    <property type="entry name" value="Integrase_catalytic"/>
</dbReference>
<dbReference type="InterPro" id="IPR010998">
    <property type="entry name" value="Integrase_recombinase_N"/>
</dbReference>
<dbReference type="InterPro" id="IPR050090">
    <property type="entry name" value="Tyrosine_recombinase_XerCD"/>
</dbReference>
<dbReference type="PANTHER" id="PTHR30349">
    <property type="entry name" value="PHAGE INTEGRASE-RELATED"/>
    <property type="match status" value="1"/>
</dbReference>
<dbReference type="PANTHER" id="PTHR30349:SF64">
    <property type="entry name" value="PROPHAGE INTEGRASE INTD-RELATED"/>
    <property type="match status" value="1"/>
</dbReference>
<dbReference type="Pfam" id="PF00589">
    <property type="entry name" value="Phage_integrase"/>
    <property type="match status" value="1"/>
</dbReference>
<dbReference type="SUPFAM" id="SSF56349">
    <property type="entry name" value="DNA breaking-rejoining enzymes"/>
    <property type="match status" value="1"/>
</dbReference>
<dbReference type="PROSITE" id="PS51900">
    <property type="entry name" value="CB"/>
    <property type="match status" value="1"/>
</dbReference>
<dbReference type="PROSITE" id="PS51898">
    <property type="entry name" value="TYR_RECOMBINASE"/>
    <property type="match status" value="1"/>
</dbReference>
<comment type="function">
    <text>Integrase is necessary for integration of the phage into the host genome by site-specific recombination.</text>
</comment>
<comment type="similarity">
    <text evidence="4">Belongs to the 'phage' integrase family.</text>
</comment>
<name>VINT_BPMFR</name>
<reference key="1">
    <citation type="journal article" date="1992" name="Nucleic Acids Res.">
        <title>Molecular cloning and sequencing of the attachment site and integrase gene of the temperate mycobacteriophage FRAT1.</title>
        <authorList>
            <person name="Haeseleer F."/>
            <person name="Pollet J.F."/>
            <person name="Bollen A."/>
            <person name="Jacobs P."/>
        </authorList>
    </citation>
    <scope>NUCLEOTIDE SEQUENCE [GENOMIC DNA]</scope>
</reference>
<gene>
    <name type="primary">int</name>
</gene>
<keyword id="KW-0229">DNA integration</keyword>
<keyword id="KW-0233">DNA recombination</keyword>
<keyword id="KW-0238">DNA-binding</keyword>
<keyword id="KW-0378">Hydrolase</keyword>
<keyword id="KW-0808">Transferase</keyword>
<keyword id="KW-1179">Viral genome integration</keyword>
<keyword id="KW-1160">Virus entry into host cell</keyword>
<feature type="chain" id="PRO_0000197504" description="Integrase">
    <location>
        <begin position="1"/>
        <end position="333"/>
    </location>
</feature>
<feature type="domain" description="Core-binding (CB)" evidence="3">
    <location>
        <begin position="34"/>
        <end position="112"/>
    </location>
</feature>
<feature type="domain" description="Tyr recombinase" evidence="2">
    <location>
        <begin position="132"/>
        <end position="323"/>
    </location>
</feature>
<feature type="active site" evidence="2">
    <location>
        <position position="166"/>
    </location>
</feature>
<feature type="active site" evidence="2">
    <location>
        <position position="206"/>
    </location>
</feature>
<feature type="active site" evidence="2">
    <location>
        <position position="275"/>
    </location>
</feature>
<feature type="active site" evidence="2">
    <location>
        <position position="278"/>
    </location>
</feature>
<feature type="active site" evidence="2">
    <location>
        <position position="301"/>
    </location>
</feature>
<feature type="active site" description="O-(3'-phospho-DNA)-tyrosine intermediate" evidence="2">
    <location>
        <position position="310"/>
    </location>
</feature>
<organismHost>
    <name type="scientific">Mycobacterium</name>
    <dbReference type="NCBI Taxonomy" id="1763"/>
</organismHost>
<organism>
    <name type="scientific">Mycobacterium phage FRAT1</name>
    <name type="common">Mycobacteriophage FRAT1</name>
    <dbReference type="NCBI Taxonomy" id="12388"/>
    <lineage>
        <taxon>Viruses</taxon>
    </lineage>
</organism>